<protein>
    <recommendedName>
        <fullName evidence="1">2,3-bisphosphoglycerate-independent phosphoglycerate mutase</fullName>
        <shortName evidence="1">BPG-independent PGAM</shortName>
        <shortName evidence="1">Phosphoglyceromutase</shortName>
        <shortName evidence="1">iPGM</shortName>
        <ecNumber evidence="1">5.4.2.12</ecNumber>
    </recommendedName>
</protein>
<feature type="chain" id="PRO_0000212187" description="2,3-bisphosphoglycerate-independent phosphoglycerate mutase">
    <location>
        <begin position="1"/>
        <end position="514"/>
    </location>
</feature>
<feature type="active site" description="Phosphoserine intermediate" evidence="1">
    <location>
        <position position="64"/>
    </location>
</feature>
<feature type="binding site" evidence="1">
    <location>
        <position position="14"/>
    </location>
    <ligand>
        <name>Mn(2+)</name>
        <dbReference type="ChEBI" id="CHEBI:29035"/>
        <label>2</label>
    </ligand>
</feature>
<feature type="binding site" evidence="1">
    <location>
        <position position="64"/>
    </location>
    <ligand>
        <name>Mn(2+)</name>
        <dbReference type="ChEBI" id="CHEBI:29035"/>
        <label>2</label>
    </ligand>
</feature>
<feature type="binding site" evidence="1">
    <location>
        <position position="125"/>
    </location>
    <ligand>
        <name>substrate</name>
    </ligand>
</feature>
<feature type="binding site" evidence="1">
    <location>
        <begin position="155"/>
        <end position="156"/>
    </location>
    <ligand>
        <name>substrate</name>
    </ligand>
</feature>
<feature type="binding site" evidence="1">
    <location>
        <position position="187"/>
    </location>
    <ligand>
        <name>substrate</name>
    </ligand>
</feature>
<feature type="binding site" evidence="1">
    <location>
        <position position="193"/>
    </location>
    <ligand>
        <name>substrate</name>
    </ligand>
</feature>
<feature type="binding site" evidence="1">
    <location>
        <begin position="263"/>
        <end position="266"/>
    </location>
    <ligand>
        <name>substrate</name>
    </ligand>
</feature>
<feature type="binding site" evidence="1">
    <location>
        <position position="337"/>
    </location>
    <ligand>
        <name>substrate</name>
    </ligand>
</feature>
<feature type="binding site" evidence="1">
    <location>
        <position position="404"/>
    </location>
    <ligand>
        <name>Mn(2+)</name>
        <dbReference type="ChEBI" id="CHEBI:29035"/>
        <label>1</label>
    </ligand>
</feature>
<feature type="binding site" evidence="1">
    <location>
        <position position="408"/>
    </location>
    <ligand>
        <name>Mn(2+)</name>
        <dbReference type="ChEBI" id="CHEBI:29035"/>
        <label>1</label>
    </ligand>
</feature>
<feature type="binding site" evidence="1">
    <location>
        <position position="445"/>
    </location>
    <ligand>
        <name>Mn(2+)</name>
        <dbReference type="ChEBI" id="CHEBI:29035"/>
        <label>2</label>
    </ligand>
</feature>
<feature type="binding site" evidence="1">
    <location>
        <position position="446"/>
    </location>
    <ligand>
        <name>Mn(2+)</name>
        <dbReference type="ChEBI" id="CHEBI:29035"/>
        <label>2</label>
    </ligand>
</feature>
<feature type="binding site" evidence="1">
    <location>
        <position position="464"/>
    </location>
    <ligand>
        <name>Mn(2+)</name>
        <dbReference type="ChEBI" id="CHEBI:29035"/>
        <label>1</label>
    </ligand>
</feature>
<comment type="function">
    <text evidence="1">Catalyzes the interconversion of 2-phosphoglycerate and 3-phosphoglycerate.</text>
</comment>
<comment type="catalytic activity">
    <reaction evidence="1">
        <text>(2R)-2-phosphoglycerate = (2R)-3-phosphoglycerate</text>
        <dbReference type="Rhea" id="RHEA:15901"/>
        <dbReference type="ChEBI" id="CHEBI:58272"/>
        <dbReference type="ChEBI" id="CHEBI:58289"/>
        <dbReference type="EC" id="5.4.2.12"/>
    </reaction>
</comment>
<comment type="cofactor">
    <cofactor evidence="1">
        <name>Mn(2+)</name>
        <dbReference type="ChEBI" id="CHEBI:29035"/>
    </cofactor>
    <text evidence="1">Binds 2 manganese ions per subunit.</text>
</comment>
<comment type="pathway">
    <text evidence="1">Carbohydrate degradation; glycolysis; pyruvate from D-glyceraldehyde 3-phosphate: step 3/5.</text>
</comment>
<comment type="subunit">
    <text evidence="1">Monomer.</text>
</comment>
<comment type="similarity">
    <text evidence="1">Belongs to the BPG-independent phosphoglycerate mutase family.</text>
</comment>
<reference key="1">
    <citation type="journal article" date="2005" name="Genome Res.">
        <title>Coping with cold: the genome of the versatile marine Antarctica bacterium Pseudoalteromonas haloplanktis TAC125.</title>
        <authorList>
            <person name="Medigue C."/>
            <person name="Krin E."/>
            <person name="Pascal G."/>
            <person name="Barbe V."/>
            <person name="Bernsel A."/>
            <person name="Bertin P.N."/>
            <person name="Cheung F."/>
            <person name="Cruveiller S."/>
            <person name="D'Amico S."/>
            <person name="Duilio A."/>
            <person name="Fang G."/>
            <person name="Feller G."/>
            <person name="Ho C."/>
            <person name="Mangenot S."/>
            <person name="Marino G."/>
            <person name="Nilsson J."/>
            <person name="Parrilli E."/>
            <person name="Rocha E.P.C."/>
            <person name="Rouy Z."/>
            <person name="Sekowska A."/>
            <person name="Tutino M.L."/>
            <person name="Vallenet D."/>
            <person name="von Heijne G."/>
            <person name="Danchin A."/>
        </authorList>
    </citation>
    <scope>NUCLEOTIDE SEQUENCE [LARGE SCALE GENOMIC DNA]</scope>
    <source>
        <strain>TAC 125</strain>
    </source>
</reference>
<name>GPMI_PSET1</name>
<gene>
    <name evidence="1" type="primary">gpmI</name>
    <name type="synonym">gpmM</name>
    <name type="ordered locus">PSHAa0366</name>
</gene>
<dbReference type="EC" id="5.4.2.12" evidence="1"/>
<dbReference type="EMBL" id="CR954246">
    <property type="protein sequence ID" value="CAI85464.1"/>
    <property type="molecule type" value="Genomic_DNA"/>
</dbReference>
<dbReference type="SMR" id="Q3IIE4"/>
<dbReference type="STRING" id="326442.PSHAa0366"/>
<dbReference type="KEGG" id="pha:PSHAa0366"/>
<dbReference type="PATRIC" id="fig|326442.8.peg.349"/>
<dbReference type="eggNOG" id="COG0696">
    <property type="taxonomic scope" value="Bacteria"/>
</dbReference>
<dbReference type="HOGENOM" id="CLU_026099_2_0_6"/>
<dbReference type="BioCyc" id="PHAL326442:PSHA_RS01815-MONOMER"/>
<dbReference type="UniPathway" id="UPA00109">
    <property type="reaction ID" value="UER00186"/>
</dbReference>
<dbReference type="Proteomes" id="UP000006843">
    <property type="component" value="Chromosome I"/>
</dbReference>
<dbReference type="GO" id="GO:0005829">
    <property type="term" value="C:cytosol"/>
    <property type="evidence" value="ECO:0007669"/>
    <property type="project" value="TreeGrafter"/>
</dbReference>
<dbReference type="GO" id="GO:0030145">
    <property type="term" value="F:manganese ion binding"/>
    <property type="evidence" value="ECO:0007669"/>
    <property type="project" value="UniProtKB-UniRule"/>
</dbReference>
<dbReference type="GO" id="GO:0004619">
    <property type="term" value="F:phosphoglycerate mutase activity"/>
    <property type="evidence" value="ECO:0007669"/>
    <property type="project" value="UniProtKB-EC"/>
</dbReference>
<dbReference type="GO" id="GO:0006007">
    <property type="term" value="P:glucose catabolic process"/>
    <property type="evidence" value="ECO:0007669"/>
    <property type="project" value="InterPro"/>
</dbReference>
<dbReference type="GO" id="GO:0006096">
    <property type="term" value="P:glycolytic process"/>
    <property type="evidence" value="ECO:0007669"/>
    <property type="project" value="UniProtKB-UniRule"/>
</dbReference>
<dbReference type="CDD" id="cd16010">
    <property type="entry name" value="iPGM"/>
    <property type="match status" value="1"/>
</dbReference>
<dbReference type="FunFam" id="3.40.1450.10:FF:000001">
    <property type="entry name" value="2,3-bisphosphoglycerate-independent phosphoglycerate mutase"/>
    <property type="match status" value="1"/>
</dbReference>
<dbReference type="FunFam" id="3.40.720.10:FF:000001">
    <property type="entry name" value="2,3-bisphosphoglycerate-independent phosphoglycerate mutase"/>
    <property type="match status" value="1"/>
</dbReference>
<dbReference type="Gene3D" id="3.40.720.10">
    <property type="entry name" value="Alkaline Phosphatase, subunit A"/>
    <property type="match status" value="1"/>
</dbReference>
<dbReference type="Gene3D" id="3.40.1450.10">
    <property type="entry name" value="BPG-independent phosphoglycerate mutase, domain B"/>
    <property type="match status" value="1"/>
</dbReference>
<dbReference type="HAMAP" id="MF_01038">
    <property type="entry name" value="GpmI"/>
    <property type="match status" value="1"/>
</dbReference>
<dbReference type="InterPro" id="IPR017850">
    <property type="entry name" value="Alkaline_phosphatase_core_sf"/>
</dbReference>
<dbReference type="InterPro" id="IPR011258">
    <property type="entry name" value="BPG-indep_PGM_N"/>
</dbReference>
<dbReference type="InterPro" id="IPR006124">
    <property type="entry name" value="Metalloenzyme"/>
</dbReference>
<dbReference type="InterPro" id="IPR036646">
    <property type="entry name" value="PGAM_B_sf"/>
</dbReference>
<dbReference type="InterPro" id="IPR005995">
    <property type="entry name" value="Pgm_bpd_ind"/>
</dbReference>
<dbReference type="NCBIfam" id="TIGR01307">
    <property type="entry name" value="pgm_bpd_ind"/>
    <property type="match status" value="1"/>
</dbReference>
<dbReference type="NCBIfam" id="NF003897">
    <property type="entry name" value="PRK05434.1-5"/>
    <property type="match status" value="1"/>
</dbReference>
<dbReference type="PANTHER" id="PTHR31637">
    <property type="entry name" value="2,3-BISPHOSPHOGLYCERATE-INDEPENDENT PHOSPHOGLYCERATE MUTASE"/>
    <property type="match status" value="1"/>
</dbReference>
<dbReference type="PANTHER" id="PTHR31637:SF0">
    <property type="entry name" value="2,3-BISPHOSPHOGLYCERATE-INDEPENDENT PHOSPHOGLYCERATE MUTASE"/>
    <property type="match status" value="1"/>
</dbReference>
<dbReference type="Pfam" id="PF06415">
    <property type="entry name" value="iPGM_N"/>
    <property type="match status" value="1"/>
</dbReference>
<dbReference type="Pfam" id="PF01676">
    <property type="entry name" value="Metalloenzyme"/>
    <property type="match status" value="1"/>
</dbReference>
<dbReference type="PIRSF" id="PIRSF001492">
    <property type="entry name" value="IPGAM"/>
    <property type="match status" value="1"/>
</dbReference>
<dbReference type="SUPFAM" id="SSF64158">
    <property type="entry name" value="2,3-Bisphosphoglycerate-independent phosphoglycerate mutase, substrate-binding domain"/>
    <property type="match status" value="1"/>
</dbReference>
<dbReference type="SUPFAM" id="SSF53649">
    <property type="entry name" value="Alkaline phosphatase-like"/>
    <property type="match status" value="1"/>
</dbReference>
<organism>
    <name type="scientific">Pseudoalteromonas translucida (strain TAC 125)</name>
    <dbReference type="NCBI Taxonomy" id="326442"/>
    <lineage>
        <taxon>Bacteria</taxon>
        <taxon>Pseudomonadati</taxon>
        <taxon>Pseudomonadota</taxon>
        <taxon>Gammaproteobacteria</taxon>
        <taxon>Alteromonadales</taxon>
        <taxon>Pseudoalteromonadaceae</taxon>
        <taxon>Pseudoalteromonas</taxon>
    </lineage>
</organism>
<keyword id="KW-0324">Glycolysis</keyword>
<keyword id="KW-0413">Isomerase</keyword>
<keyword id="KW-0464">Manganese</keyword>
<keyword id="KW-0479">Metal-binding</keyword>
<keyword id="KW-1185">Reference proteome</keyword>
<accession>Q3IIE4</accession>
<sequence>MSEHKKPLVLMILDGWGYREDEQSNAILAANTPVLDELWATRPRTLISASGFDVGLPDGQMGNSEVGHVNLGAGRVVYQDFTRITKAINDGEFDSTPALVDNIDKAVSADKAVHIMGLLSPGGVHSHEDHIVASIELAAKRGAKEVYFHGFLDGRDTPPRSAKASIERIEAVFAKLQCGRLASLIGRYYAMDRDNRWNRVEKAYNLLTLAQGDFSYPTGVSALEAAYERDENDEFVAASTITPAGAEPVQINDGDTVIFANFRADRAREITRAFVEPNFDGFAKQKSPALSAFVMMTEYAADIDAPVAFGPTPLVNVLGEWFEKHGKTQLRISETEKYAHVTFFFSGGREDEFNGETRELIPSPQVATYDLQPEMNSEMLTDKLVAAIKSGKYDAIICNYPNGDMVGHSGVFAAAVKACEAVDHCIGRVVAALNKYGGEALITADHGNAEQMANLKTGQAHTAHTSEPVPFIYVGRDATASEGKALSDVAPTMLHLMGMEQPTEMTGKPIMTLK</sequence>
<evidence type="ECO:0000255" key="1">
    <source>
        <dbReference type="HAMAP-Rule" id="MF_01038"/>
    </source>
</evidence>
<proteinExistence type="inferred from homology"/>